<organismHost>
    <name type="scientific">Cynomys gunnisoni</name>
    <name type="common">Gunnison's prairie dog</name>
    <name type="synonym">Spermophilus gunnisoni</name>
    <dbReference type="NCBI Taxonomy" id="45479"/>
</organismHost>
<organismHost>
    <name type="scientific">Cynomys leucurus</name>
    <name type="common">White-tailed prairie dog</name>
    <dbReference type="NCBI Taxonomy" id="99825"/>
</organismHost>
<organismHost>
    <name type="scientific">Cynomys ludovicianus</name>
    <name type="common">Black-tailed prairie dog</name>
    <dbReference type="NCBI Taxonomy" id="45480"/>
</organismHost>
<organismHost>
    <name type="scientific">Cynomys mexicanus</name>
    <name type="common">Mexican prairie dog</name>
    <dbReference type="NCBI Taxonomy" id="99826"/>
</organismHost>
<organismHost>
    <name type="scientific">Cynomys parvidens</name>
    <name type="common">Utah prairie dog</name>
    <dbReference type="NCBI Taxonomy" id="99827"/>
</organismHost>
<organismHost>
    <name type="scientific">Gliridae</name>
    <name type="common">dormice</name>
    <dbReference type="NCBI Taxonomy" id="30650"/>
</organismHost>
<organismHost>
    <name type="scientific">Heliosciurus ruwenzorii</name>
    <name type="common">Ruwenzori sun squirrel</name>
    <dbReference type="NCBI Taxonomy" id="226685"/>
</organismHost>
<organismHost>
    <name type="scientific">Homo sapiens</name>
    <name type="common">Human</name>
    <dbReference type="NCBI Taxonomy" id="9606"/>
</organismHost>
<organismHost>
    <name type="scientific">Mus musculus</name>
    <name type="common">Mouse</name>
    <dbReference type="NCBI Taxonomy" id="10090"/>
</organismHost>
<evidence type="ECO:0000250" key="1"/>
<evidence type="ECO:0000250" key="2">
    <source>
        <dbReference type="UniProtKB" id="P11158"/>
    </source>
</evidence>
<evidence type="ECO:0000255" key="3">
    <source>
        <dbReference type="PROSITE-ProRule" id="PRU10014"/>
    </source>
</evidence>
<evidence type="ECO:0000305" key="4"/>
<evidence type="ECO:0000312" key="5">
    <source>
        <dbReference type="EMBL" id="QNP12904.1"/>
    </source>
</evidence>
<keyword id="KW-0215">Deoxyribonucleotide synthesis</keyword>
<keyword id="KW-0244">Early protein</keyword>
<keyword id="KW-0408">Iron</keyword>
<keyword id="KW-0479">Metal-binding</keyword>
<keyword id="KW-0560">Oxidoreductase</keyword>
<keyword id="KW-1185">Reference proteome</keyword>
<protein>
    <recommendedName>
        <fullName>Ribonucleoside-diphosphate reductase small chain</fullName>
        <ecNumber>1.17.4.1</ecNumber>
    </recommendedName>
    <alternativeName>
        <fullName>Ribonucleotide reductase small subunit</fullName>
    </alternativeName>
    <alternativeName>
        <fullName>Ribonucleotide reductase subunit 2</fullName>
        <shortName>RNR2</shortName>
    </alternativeName>
</protein>
<proteinExistence type="inferred from homology"/>
<comment type="function">
    <text evidence="2">Ribonucleoside-diphosphate reductase holoenzyme provides the precursors necessary for viral DNA synthesis. Allows virus growth in non-dividing cells. Catalyzes the biosynthesis of deoxyribonucleotides from the corresponding ribonucleotides.</text>
</comment>
<comment type="catalytic activity">
    <reaction evidence="3">
        <text>a 2'-deoxyribonucleoside 5'-diphosphate + [thioredoxin]-disulfide + H2O = a ribonucleoside 5'-diphosphate + [thioredoxin]-dithiol</text>
        <dbReference type="Rhea" id="RHEA:23252"/>
        <dbReference type="Rhea" id="RHEA-COMP:10698"/>
        <dbReference type="Rhea" id="RHEA-COMP:10700"/>
        <dbReference type="ChEBI" id="CHEBI:15377"/>
        <dbReference type="ChEBI" id="CHEBI:29950"/>
        <dbReference type="ChEBI" id="CHEBI:50058"/>
        <dbReference type="ChEBI" id="CHEBI:57930"/>
        <dbReference type="ChEBI" id="CHEBI:73316"/>
        <dbReference type="EC" id="1.17.4.1"/>
    </reaction>
</comment>
<comment type="cofactor">
    <cofactor evidence="1">
        <name>Fe cation</name>
        <dbReference type="ChEBI" id="CHEBI:24875"/>
    </cofactor>
    <text evidence="1">Binds 2 iron ions per subunit.</text>
</comment>
<comment type="subunit">
    <text evidence="2">Interacts with RNR1/OPG080 subunit. Can interact with host RNR1 supunit.</text>
</comment>
<comment type="similarity">
    <text evidence="4">Belongs to the ribonucleoside diphosphate reductase small chain family.</text>
</comment>
<gene>
    <name type="primary">OPG048</name>
    <name evidence="5" type="ORF">MPXV-M5312_HM12_Rivers-032</name>
</gene>
<dbReference type="EC" id="1.17.4.1"/>
<dbReference type="EMBL" id="MT903340">
    <property type="protein sequence ID" value="QNP12904.1"/>
    <property type="molecule type" value="Genomic_DNA"/>
</dbReference>
<dbReference type="RefSeq" id="NP_536463.1">
    <property type="nucleotide sequence ID" value="NC_003310.1"/>
</dbReference>
<dbReference type="RefSeq" id="YP_010377031.1">
    <property type="nucleotide sequence ID" value="NC_063383.1"/>
</dbReference>
<dbReference type="SMR" id="A0A7H0DN21"/>
<dbReference type="GeneID" id="72551444"/>
<dbReference type="GeneID" id="928921"/>
<dbReference type="KEGG" id="vg:928921"/>
<dbReference type="Proteomes" id="UP000516359">
    <property type="component" value="Genome"/>
</dbReference>
<dbReference type="GO" id="GO:0046872">
    <property type="term" value="F:metal ion binding"/>
    <property type="evidence" value="ECO:0007669"/>
    <property type="project" value="UniProtKB-KW"/>
</dbReference>
<dbReference type="GO" id="GO:0004748">
    <property type="term" value="F:ribonucleoside-diphosphate reductase activity, thioredoxin disulfide as acceptor"/>
    <property type="evidence" value="ECO:0007669"/>
    <property type="project" value="TreeGrafter"/>
</dbReference>
<dbReference type="GO" id="GO:0009263">
    <property type="term" value="P:deoxyribonucleotide biosynthetic process"/>
    <property type="evidence" value="ECO:0007669"/>
    <property type="project" value="UniProtKB-KW"/>
</dbReference>
<dbReference type="CDD" id="cd01049">
    <property type="entry name" value="RNRR2"/>
    <property type="match status" value="1"/>
</dbReference>
<dbReference type="FunFam" id="1.10.620.20:FF:000004">
    <property type="entry name" value="Ribonucleoside-diphosphate reductase subunit M2 B"/>
    <property type="match status" value="1"/>
</dbReference>
<dbReference type="Gene3D" id="1.10.620.20">
    <property type="entry name" value="Ribonucleotide Reductase, subunit A"/>
    <property type="match status" value="1"/>
</dbReference>
<dbReference type="InterPro" id="IPR009078">
    <property type="entry name" value="Ferritin-like_SF"/>
</dbReference>
<dbReference type="InterPro" id="IPR012348">
    <property type="entry name" value="RNR-like"/>
</dbReference>
<dbReference type="InterPro" id="IPR033909">
    <property type="entry name" value="RNR_small"/>
</dbReference>
<dbReference type="InterPro" id="IPR030475">
    <property type="entry name" value="RNR_small_AS"/>
</dbReference>
<dbReference type="InterPro" id="IPR000358">
    <property type="entry name" value="RNR_small_fam"/>
</dbReference>
<dbReference type="PANTHER" id="PTHR23409">
    <property type="entry name" value="RIBONUCLEOSIDE-DIPHOSPHATE REDUCTASE SMALL CHAIN"/>
    <property type="match status" value="1"/>
</dbReference>
<dbReference type="PANTHER" id="PTHR23409:SF18">
    <property type="entry name" value="RIBONUCLEOSIDE-DIPHOSPHATE REDUCTASE SUBUNIT M2"/>
    <property type="match status" value="1"/>
</dbReference>
<dbReference type="Pfam" id="PF00268">
    <property type="entry name" value="Ribonuc_red_sm"/>
    <property type="match status" value="1"/>
</dbReference>
<dbReference type="SUPFAM" id="SSF47240">
    <property type="entry name" value="Ferritin-like"/>
    <property type="match status" value="1"/>
</dbReference>
<dbReference type="PROSITE" id="PS00368">
    <property type="entry name" value="RIBORED_SMALL"/>
    <property type="match status" value="1"/>
</dbReference>
<feature type="chain" id="PRO_0000457642" description="Ribonucleoside-diphosphate reductase small chain">
    <location>
        <begin position="1"/>
        <end position="319"/>
    </location>
</feature>
<feature type="region of interest" description="Interaction with R1" evidence="2">
    <location>
        <begin position="313"/>
        <end position="319"/>
    </location>
</feature>
<sequence length="319" mass="37035">MEPILAPNPNRFVIFPIQYHDIWNMYKKAEASFWTVEEVDISKDINDWNKLTPDEKYFIKHVLAFFAASDGIVNENLAERFCTEVQITEARCFYGFQMAIENIHSEMYSLLIDTYVKDSNEKNYLFNAIETMPCVKKKADWAQKWIHDSAGYGERLIAFAAVEGIFFSGSFASIFWLKKRGLMPGLTFSNELISRDEGLHCDFACLMFKHLLHPPSEETVRFIITNAVSIEQEFLTVALPVKLIGMNCEMMKTYIEFVADRLISELGFKKIYNVTNPFDFMENISLEGKTNFFEKRVGEYQKMGVMSQEDNHFSLDVDF</sequence>
<organism>
    <name type="scientific">Monkeypox virus</name>
    <dbReference type="NCBI Taxonomy" id="10244"/>
    <lineage>
        <taxon>Viruses</taxon>
        <taxon>Varidnaviria</taxon>
        <taxon>Bamfordvirae</taxon>
        <taxon>Nucleocytoviricota</taxon>
        <taxon>Pokkesviricetes</taxon>
        <taxon>Chitovirales</taxon>
        <taxon>Poxviridae</taxon>
        <taxon>Chordopoxvirinae</taxon>
        <taxon>Orthopoxvirus</taxon>
    </lineage>
</organism>
<accession>A0A7H0DN21</accession>
<name>RIR2_MONPV</name>
<reference key="1">
    <citation type="journal article" date="2022" name="J. Infect. Dis.">
        <title>Exportation of Monkeypox virus from the African continent.</title>
        <authorList>
            <person name="Mauldin M.R."/>
            <person name="McCollum A.M."/>
            <person name="Nakazawa Y.J."/>
            <person name="Mandra A."/>
            <person name="Whitehouse E.R."/>
            <person name="Davidson W."/>
            <person name="Zhao H."/>
            <person name="Gao J."/>
            <person name="Li Y."/>
            <person name="Doty J."/>
            <person name="Yinka-Ogunleye A."/>
            <person name="Akinpelu A."/>
            <person name="Aruna O."/>
            <person name="Naidoo D."/>
            <person name="Lewandowski K."/>
            <person name="Afrough B."/>
            <person name="Graham V."/>
            <person name="Aarons E."/>
            <person name="Hewson R."/>
            <person name="Vipond R."/>
            <person name="Dunning J."/>
            <person name="Chand M."/>
            <person name="Brown C."/>
            <person name="Cohen-Gihon I."/>
            <person name="Erez N."/>
            <person name="Shifman O."/>
            <person name="Israeli O."/>
            <person name="Sharon M."/>
            <person name="Schwartz E."/>
            <person name="Beth-Din A."/>
            <person name="Zvi A."/>
            <person name="Mak T.M."/>
            <person name="Ng Y.K."/>
            <person name="Cui L."/>
            <person name="Lin R.T.P."/>
            <person name="Olson V.A."/>
            <person name="Brooks T."/>
            <person name="Paran N."/>
            <person name="Ihekweazu C."/>
            <person name="Reynolds M.G."/>
        </authorList>
    </citation>
    <scope>NUCLEOTIDE SEQUENCE [LARGE SCALE GENOMIC DNA]</scope>
    <source>
        <strain>MPXV-M5312_HM12_Rivers</strain>
    </source>
</reference>